<accession>Q3V541</accession>
<reference key="1">
    <citation type="journal article" date="2005" name="Mol. Biol. Evol.">
        <title>Analysis of Acorus calamus chloroplast genome and its phylogenetic implications.</title>
        <authorList>
            <person name="Goremykin V.V."/>
            <person name="Holland B."/>
            <person name="Hirsch-Ernst K.I."/>
            <person name="Hellwig F.H."/>
        </authorList>
    </citation>
    <scope>NUCLEOTIDE SEQUENCE [LARGE SCALE GENOMIC DNA]</scope>
</reference>
<name>PETN_ACOCL</name>
<proteinExistence type="inferred from homology"/>
<evidence type="ECO:0000255" key="1">
    <source>
        <dbReference type="HAMAP-Rule" id="MF_00395"/>
    </source>
</evidence>
<protein>
    <recommendedName>
        <fullName evidence="1">Cytochrome b6-f complex subunit 8</fullName>
    </recommendedName>
    <alternativeName>
        <fullName evidence="1">Cytochrome b6-f complex subunit PetN</fullName>
    </alternativeName>
    <alternativeName>
        <fullName evidence="1">Cytochrome b6-f complex subunit VIII</fullName>
    </alternativeName>
</protein>
<gene>
    <name evidence="1" type="primary">petN</name>
</gene>
<organism>
    <name type="scientific">Acorus calamus</name>
    <name type="common">Sweet flag</name>
    <dbReference type="NCBI Taxonomy" id="4465"/>
    <lineage>
        <taxon>Eukaryota</taxon>
        <taxon>Viridiplantae</taxon>
        <taxon>Streptophyta</taxon>
        <taxon>Embryophyta</taxon>
        <taxon>Tracheophyta</taxon>
        <taxon>Spermatophyta</taxon>
        <taxon>Magnoliopsida</taxon>
        <taxon>Liliopsida</taxon>
        <taxon>Acoraceae</taxon>
        <taxon>Acorus</taxon>
    </lineage>
</organism>
<dbReference type="EMBL" id="AJ879453">
    <property type="protein sequence ID" value="CAI53787.1"/>
    <property type="molecule type" value="Genomic_DNA"/>
</dbReference>
<dbReference type="RefSeq" id="YP_319758.2">
    <property type="nucleotide sequence ID" value="NC_007407.1"/>
</dbReference>
<dbReference type="SMR" id="Q3V541"/>
<dbReference type="GeneID" id="3677494"/>
<dbReference type="GO" id="GO:0009535">
    <property type="term" value="C:chloroplast thylakoid membrane"/>
    <property type="evidence" value="ECO:0007669"/>
    <property type="project" value="UniProtKB-SubCell"/>
</dbReference>
<dbReference type="GO" id="GO:0009512">
    <property type="term" value="C:cytochrome b6f complex"/>
    <property type="evidence" value="ECO:0007669"/>
    <property type="project" value="InterPro"/>
</dbReference>
<dbReference type="GO" id="GO:0045158">
    <property type="term" value="F:electron transporter, transferring electrons within cytochrome b6/f complex of photosystem II activity"/>
    <property type="evidence" value="ECO:0007669"/>
    <property type="project" value="InterPro"/>
</dbReference>
<dbReference type="GO" id="GO:0017004">
    <property type="term" value="P:cytochrome complex assembly"/>
    <property type="evidence" value="ECO:0007669"/>
    <property type="project" value="UniProtKB-UniRule"/>
</dbReference>
<dbReference type="GO" id="GO:0015979">
    <property type="term" value="P:photosynthesis"/>
    <property type="evidence" value="ECO:0007669"/>
    <property type="project" value="UniProtKB-KW"/>
</dbReference>
<dbReference type="HAMAP" id="MF_00395">
    <property type="entry name" value="Cytb6_f_PetN"/>
    <property type="match status" value="1"/>
</dbReference>
<dbReference type="InterPro" id="IPR036143">
    <property type="entry name" value="Cytochr_b6-f_cplx_su8_sf"/>
</dbReference>
<dbReference type="InterPro" id="IPR005497">
    <property type="entry name" value="Cytochrome_b6-f_cplx_su8"/>
</dbReference>
<dbReference type="Pfam" id="PF03742">
    <property type="entry name" value="PetN"/>
    <property type="match status" value="1"/>
</dbReference>
<dbReference type="SUPFAM" id="SSF103451">
    <property type="entry name" value="PetN subunit of the cytochrome b6f complex"/>
    <property type="match status" value="1"/>
</dbReference>
<comment type="function">
    <text evidence="1">Component of the cytochrome b6-f complex, which mediates electron transfer between photosystem II (PSII) and photosystem I (PSI), cyclic electron flow around PSI, and state transitions.</text>
</comment>
<comment type="subunit">
    <text evidence="1">The 4 large subunits of the cytochrome b6-f complex are cytochrome b6, subunit IV (17 kDa polypeptide, PetD), cytochrome f and the Rieske protein, while the 4 small subunits are PetG, PetL, PetM and PetN. The complex functions as a dimer.</text>
</comment>
<comment type="subcellular location">
    <subcellularLocation>
        <location evidence="1">Plastid</location>
        <location evidence="1">Chloroplast thylakoid membrane</location>
        <topology evidence="1">Single-pass membrane protein</topology>
    </subcellularLocation>
</comment>
<comment type="similarity">
    <text evidence="1">Belongs to the PetN family.</text>
</comment>
<sequence>MHMDIVSLAWAALMVVFTFSLSLVVWGRSGL</sequence>
<geneLocation type="chloroplast"/>
<feature type="chain" id="PRO_0000355416" description="Cytochrome b6-f complex subunit 8">
    <location>
        <begin position="1"/>
        <end position="31"/>
    </location>
</feature>
<feature type="transmembrane region" description="Helical" evidence="1">
    <location>
        <begin position="5"/>
        <end position="25"/>
    </location>
</feature>
<keyword id="KW-0150">Chloroplast</keyword>
<keyword id="KW-0249">Electron transport</keyword>
<keyword id="KW-0472">Membrane</keyword>
<keyword id="KW-0602">Photosynthesis</keyword>
<keyword id="KW-0934">Plastid</keyword>
<keyword id="KW-0793">Thylakoid</keyword>
<keyword id="KW-0812">Transmembrane</keyword>
<keyword id="KW-1133">Transmembrane helix</keyword>
<keyword id="KW-0813">Transport</keyword>